<evidence type="ECO:0000250" key="1">
    <source>
        <dbReference type="UniProtKB" id="P22243"/>
    </source>
</evidence>
<evidence type="ECO:0000250" key="2">
    <source>
        <dbReference type="UniProtKB" id="P22337"/>
    </source>
</evidence>
<evidence type="ECO:0000305" key="3"/>
<keyword id="KW-0150">Chloroplast</keyword>
<keyword id="KW-0275">Fatty acid biosynthesis</keyword>
<keyword id="KW-0276">Fatty acid metabolism</keyword>
<keyword id="KW-0408">Iron</keyword>
<keyword id="KW-0444">Lipid biosynthesis</keyword>
<keyword id="KW-0443">Lipid metabolism</keyword>
<keyword id="KW-0479">Metal-binding</keyword>
<keyword id="KW-0560">Oxidoreductase</keyword>
<keyword id="KW-0934">Plastid</keyword>
<keyword id="KW-0809">Transit peptide</keyword>
<dbReference type="EC" id="1.14.19.-"/>
<dbReference type="EMBL" id="M59858">
    <property type="protein sequence ID" value="AAA33130.1"/>
    <property type="molecule type" value="mRNA"/>
</dbReference>
<dbReference type="PIR" id="B39170">
    <property type="entry name" value="B39170"/>
</dbReference>
<dbReference type="RefSeq" id="NP_001267709.1">
    <property type="nucleotide sequence ID" value="NM_001280780.1"/>
</dbReference>
<dbReference type="SMR" id="P32061"/>
<dbReference type="GeneID" id="101220831"/>
<dbReference type="KEGG" id="csv:101220831"/>
<dbReference type="eggNOG" id="ENOG502QRJK">
    <property type="taxonomic scope" value="Eukaryota"/>
</dbReference>
<dbReference type="OrthoDB" id="1924153at2759"/>
<dbReference type="UniPathway" id="UPA00199"/>
<dbReference type="GO" id="GO:0009507">
    <property type="term" value="C:chloroplast"/>
    <property type="evidence" value="ECO:0007669"/>
    <property type="project" value="UniProtKB-SubCell"/>
</dbReference>
<dbReference type="GO" id="GO:0046872">
    <property type="term" value="F:metal ion binding"/>
    <property type="evidence" value="ECO:0007669"/>
    <property type="project" value="UniProtKB-KW"/>
</dbReference>
<dbReference type="GO" id="GO:0045300">
    <property type="term" value="F:stearoyl-[ACP] desaturase activity"/>
    <property type="evidence" value="ECO:0007669"/>
    <property type="project" value="InterPro"/>
</dbReference>
<dbReference type="GO" id="GO:0006633">
    <property type="term" value="P:fatty acid biosynthetic process"/>
    <property type="evidence" value="ECO:0007669"/>
    <property type="project" value="UniProtKB-KW"/>
</dbReference>
<dbReference type="CDD" id="cd01050">
    <property type="entry name" value="Acyl_ACP_Desat"/>
    <property type="match status" value="1"/>
</dbReference>
<dbReference type="FunFam" id="1.10.620.20:FF:000002">
    <property type="entry name" value="Stearoyl-[acyl-carrier-protein] 9-desaturase, chloroplastic"/>
    <property type="match status" value="1"/>
</dbReference>
<dbReference type="Gene3D" id="1.10.620.20">
    <property type="entry name" value="Ribonucleotide Reductase, subunit A"/>
    <property type="match status" value="1"/>
</dbReference>
<dbReference type="InterPro" id="IPR005803">
    <property type="entry name" value="FADS-2_CS"/>
</dbReference>
<dbReference type="InterPro" id="IPR005067">
    <property type="entry name" value="Fatty_acid_desaturase-2"/>
</dbReference>
<dbReference type="InterPro" id="IPR009078">
    <property type="entry name" value="Ferritin-like_SF"/>
</dbReference>
<dbReference type="InterPro" id="IPR012348">
    <property type="entry name" value="RNR-like"/>
</dbReference>
<dbReference type="PANTHER" id="PTHR31155">
    <property type="entry name" value="ACYL- ACYL-CARRIER-PROTEIN DESATURASE-RELATED"/>
    <property type="match status" value="1"/>
</dbReference>
<dbReference type="PANTHER" id="PTHR31155:SF9">
    <property type="entry name" value="STEAROYL-[ACYL-CARRIER-PROTEIN] 9-DESATURASE 7, CHLOROPLASTIC"/>
    <property type="match status" value="1"/>
</dbReference>
<dbReference type="Pfam" id="PF03405">
    <property type="entry name" value="FA_desaturase_2"/>
    <property type="match status" value="1"/>
</dbReference>
<dbReference type="PIRSF" id="PIRSF000346">
    <property type="entry name" value="Dlt9_acylACP_des"/>
    <property type="match status" value="1"/>
</dbReference>
<dbReference type="SUPFAM" id="SSF47240">
    <property type="entry name" value="Ferritin-like"/>
    <property type="match status" value="1"/>
</dbReference>
<dbReference type="PROSITE" id="PS00574">
    <property type="entry name" value="FATTY_ACID_DESATUR_2"/>
    <property type="match status" value="1"/>
</dbReference>
<organism>
    <name type="scientific">Cucumis sativus</name>
    <name type="common">Cucumber</name>
    <dbReference type="NCBI Taxonomy" id="3659"/>
    <lineage>
        <taxon>Eukaryota</taxon>
        <taxon>Viridiplantae</taxon>
        <taxon>Streptophyta</taxon>
        <taxon>Embryophyta</taxon>
        <taxon>Tracheophyta</taxon>
        <taxon>Spermatophyta</taxon>
        <taxon>Magnoliopsida</taxon>
        <taxon>eudicotyledons</taxon>
        <taxon>Gunneridae</taxon>
        <taxon>Pentapetalae</taxon>
        <taxon>rosids</taxon>
        <taxon>fabids</taxon>
        <taxon>Cucurbitales</taxon>
        <taxon>Cucurbitaceae</taxon>
        <taxon>Benincaseae</taxon>
        <taxon>Cucumis</taxon>
    </lineage>
</organism>
<protein>
    <recommendedName>
        <fullName>Acyl-[acyl-carrier-protein] desaturase, chloroplastic</fullName>
        <ecNumber>1.14.19.-</ecNumber>
    </recommendedName>
</protein>
<name>STAD_CUCSA</name>
<feature type="transit peptide" description="Chloroplast" evidence="1">
    <location>
        <begin position="1"/>
        <end position="33"/>
    </location>
</feature>
<feature type="chain" id="PRO_0000007130" description="Acyl-[acyl-carrier-protein] desaturase, chloroplastic">
    <location>
        <begin position="34"/>
        <end position="396"/>
    </location>
</feature>
<feature type="binding site" evidence="2">
    <location>
        <position position="138"/>
    </location>
    <ligand>
        <name>Fe cation</name>
        <dbReference type="ChEBI" id="CHEBI:24875"/>
        <label>1</label>
    </ligand>
</feature>
<feature type="binding site" evidence="2">
    <location>
        <position position="176"/>
    </location>
    <ligand>
        <name>Fe cation</name>
        <dbReference type="ChEBI" id="CHEBI:24875"/>
        <label>1</label>
    </ligand>
</feature>
<feature type="binding site" evidence="2">
    <location>
        <position position="176"/>
    </location>
    <ligand>
        <name>Fe cation</name>
        <dbReference type="ChEBI" id="CHEBI:24875"/>
        <label>2</label>
    </ligand>
</feature>
<feature type="binding site" evidence="2">
    <location>
        <position position="179"/>
    </location>
    <ligand>
        <name>Fe cation</name>
        <dbReference type="ChEBI" id="CHEBI:24875"/>
        <label>1</label>
    </ligand>
</feature>
<feature type="binding site" evidence="2">
    <location>
        <position position="229"/>
    </location>
    <ligand>
        <name>Fe cation</name>
        <dbReference type="ChEBI" id="CHEBI:24875"/>
        <label>2</label>
    </ligand>
</feature>
<feature type="binding site" evidence="2">
    <location>
        <position position="262"/>
    </location>
    <ligand>
        <name>Fe cation</name>
        <dbReference type="ChEBI" id="CHEBI:24875"/>
        <label>1</label>
    </ligand>
</feature>
<feature type="binding site" evidence="2">
    <location>
        <position position="262"/>
    </location>
    <ligand>
        <name>Fe cation</name>
        <dbReference type="ChEBI" id="CHEBI:24875"/>
        <label>2</label>
    </ligand>
</feature>
<feature type="binding site" evidence="2">
    <location>
        <position position="265"/>
    </location>
    <ligand>
        <name>Fe cation</name>
        <dbReference type="ChEBI" id="CHEBI:24875"/>
        <label>2</label>
    </ligand>
</feature>
<feature type="sequence conflict" description="In Ref. 2." evidence="3" ref="2">
    <original>R</original>
    <variation>V</variation>
    <location>
        <position position="114"/>
    </location>
</feature>
<feature type="sequence conflict" description="In Ref. 2." evidence="3" ref="2">
    <original>E</original>
    <variation>D</variation>
    <location>
        <position position="290"/>
    </location>
</feature>
<reference key="1">
    <citation type="journal article" date="1991" name="Plant Physiol.">
        <title>Sequence of a complementary DNA from Cucumis sativus L. encoding the stearoyl-acyl-carrier protein desaturase.</title>
        <authorList>
            <person name="Shanklin J."/>
            <person name="Mullins C."/>
            <person name="Somerville C.R."/>
        </authorList>
    </citation>
    <scope>NUCLEOTIDE SEQUENCE [MRNA]</scope>
    <source>
        <tissue>Seedling cotyledon</tissue>
    </source>
</reference>
<reference key="2">
    <citation type="journal article" date="1991" name="Proc. Natl. Acad. Sci. U.S.A.">
        <title>Stearoyl-acyl-carrier-protein desaturase from higher plants is structurally unrelated to the animal and fungal homologs.</title>
        <authorList>
            <person name="Shanklin J."/>
            <person name="Somerville C.R."/>
        </authorList>
    </citation>
    <scope>NUCLEOTIDE SEQUENCE [MRNA]</scope>
</reference>
<comment type="function">
    <text evidence="3">Introduces a cis double bond in the acyl chain of an acyl-[acyl-carrier protein].</text>
</comment>
<comment type="cofactor">
    <cofactor evidence="2">
        <name>Fe(2+)</name>
        <dbReference type="ChEBI" id="CHEBI:29033"/>
    </cofactor>
    <text evidence="2">Binds 2 Fe(2+) ions per subunit.</text>
</comment>
<comment type="pathway">
    <text>Lipid metabolism; fatty acid metabolism.</text>
</comment>
<comment type="subunit">
    <text evidence="2">Homodimer.</text>
</comment>
<comment type="subcellular location">
    <subcellularLocation>
        <location>Plastid</location>
        <location>Chloroplast</location>
    </subcellularLocation>
    <subcellularLocation>
        <location>Plastid</location>
    </subcellularLocation>
    <text>In green tissue, found in chloroplasts. In non-photosynthetic tissue, found in plastids.</text>
</comment>
<comment type="similarity">
    <text evidence="3">Belongs to the fatty acid desaturase type 2 family.</text>
</comment>
<proteinExistence type="evidence at transcript level"/>
<sequence>MALKFHPLTSQSPKLPSFRMPQLASLRSPKFVMASTLRSTSREVETLKKPFMPPREVHLQVTHSMPPQKMEIFKSLEDWAEENLLVHLKPVERCWQPQDFLPDSAFEGFHEQVRELRERAKELPDEYFVVLVGDMITEEALPTYQTMLNTLDGVRDETGASPTPWAIWTRAWTAEENRHGDLLNKYLYLSGRVDMRQVEKTIQYLIGSGMDPRTENNPYLGFIYTSFQERATFISHGNTARLAKEHGDIKLAQICGTITADEKRHETAYTKIVEKLFEIDPEGTVIAFEEMMRKKVSMPAHLMYDGRDDNLFHHFSAVAQRLGVYTAKDYADILEFLVGRWKVESLTGLSGEGQKAQDYVCALPARIRKLEERAQGRAKEGPTIPFSWIFDRQVKL</sequence>
<accession>P32061</accession>